<name>MTNK_KLEP7</name>
<sequence>MSQYHTFTAHDAVAYAQQFAGIDNPSELVSAQEVGDGNLNLVFKVFDRQGVSRAIVKQALPYVRCVGESWPLTLDRARLEAQTLVAHYQHSPQHTVKIHHFDPELAVMVMEDLSDHRIWRGELIANVYYPQAARQLGDYLAQVLFHTSDFYLHPHEKKAQVAQFINPAMCEITEDLFFNDPYQIHERNNYPAELEADVAALRDDAQLKLAVAALKHRFFAHAEALLHGDIHSGSIFVAEGSLKAIDAEFGYFGPIGFDIGTAIGNLLLNYCGLPGQLGIRDAAAAREQRLNDIHQLWTTFAERFQALAAEKTRDAALAYPGYASAFLKKVWADAVGFCGSELIRRSVGLSHVADIDTIQDDAMRHECLRHAITLGRALIVLAERIDSVDELLARVRQYS</sequence>
<proteinExistence type="inferred from homology"/>
<reference key="1">
    <citation type="submission" date="2006-09" db="EMBL/GenBank/DDBJ databases">
        <authorList>
            <consortium name="The Klebsiella pneumonia Genome Sequencing Project"/>
            <person name="McClelland M."/>
            <person name="Sanderson E.K."/>
            <person name="Spieth J."/>
            <person name="Clifton W.S."/>
            <person name="Latreille P."/>
            <person name="Sabo A."/>
            <person name="Pepin K."/>
            <person name="Bhonagiri V."/>
            <person name="Porwollik S."/>
            <person name="Ali J."/>
            <person name="Wilson R.K."/>
        </authorList>
    </citation>
    <scope>NUCLEOTIDE SEQUENCE [LARGE SCALE GENOMIC DNA]</scope>
    <source>
        <strain>ATCC 700721 / MGH 78578</strain>
    </source>
</reference>
<evidence type="ECO:0000255" key="1">
    <source>
        <dbReference type="HAMAP-Rule" id="MF_01683"/>
    </source>
</evidence>
<gene>
    <name evidence="1" type="primary">mtnK</name>
    <name type="ordered locus">KPN78578_06150</name>
    <name type="ORF">KPN_00626</name>
</gene>
<accession>A6T655</accession>
<dbReference type="EC" id="2.7.1.100" evidence="1"/>
<dbReference type="EMBL" id="CP000647">
    <property type="protein sequence ID" value="ABR76076.1"/>
    <property type="molecule type" value="Genomic_DNA"/>
</dbReference>
<dbReference type="RefSeq" id="WP_004151657.1">
    <property type="nucleotide sequence ID" value="NC_009648.1"/>
</dbReference>
<dbReference type="SMR" id="A6T655"/>
<dbReference type="STRING" id="272620.KPN_00626"/>
<dbReference type="PaxDb" id="272620-KPN_00626"/>
<dbReference type="EnsemblBacteria" id="ABR76076">
    <property type="protein sequence ID" value="ABR76076"/>
    <property type="gene ID" value="KPN_00626"/>
</dbReference>
<dbReference type="KEGG" id="kpn:KPN_00626"/>
<dbReference type="HOGENOM" id="CLU_033681_0_0_6"/>
<dbReference type="UniPathway" id="UPA00904">
    <property type="reaction ID" value="UER00872"/>
</dbReference>
<dbReference type="Proteomes" id="UP000000265">
    <property type="component" value="Chromosome"/>
</dbReference>
<dbReference type="GO" id="GO:0005524">
    <property type="term" value="F:ATP binding"/>
    <property type="evidence" value="ECO:0007669"/>
    <property type="project" value="UniProtKB-UniRule"/>
</dbReference>
<dbReference type="GO" id="GO:0046522">
    <property type="term" value="F:S-methyl-5-thioribose kinase activity"/>
    <property type="evidence" value="ECO:0007669"/>
    <property type="project" value="UniProtKB-UniRule"/>
</dbReference>
<dbReference type="GO" id="GO:0019509">
    <property type="term" value="P:L-methionine salvage from methylthioadenosine"/>
    <property type="evidence" value="ECO:0007669"/>
    <property type="project" value="UniProtKB-UniRule"/>
</dbReference>
<dbReference type="Gene3D" id="3.90.1200.10">
    <property type="match status" value="1"/>
</dbReference>
<dbReference type="Gene3D" id="3.30.200.20">
    <property type="entry name" value="Phosphorylase Kinase, domain 1"/>
    <property type="match status" value="1"/>
</dbReference>
<dbReference type="HAMAP" id="MF_01683">
    <property type="entry name" value="Salvage_MtnK"/>
    <property type="match status" value="1"/>
</dbReference>
<dbReference type="InterPro" id="IPR002575">
    <property type="entry name" value="Aminoglycoside_PTrfase"/>
</dbReference>
<dbReference type="InterPro" id="IPR011009">
    <property type="entry name" value="Kinase-like_dom_sf"/>
</dbReference>
<dbReference type="InterPro" id="IPR009212">
    <property type="entry name" value="Methylthioribose_kinase"/>
</dbReference>
<dbReference type="NCBIfam" id="TIGR01767">
    <property type="entry name" value="MTRK"/>
    <property type="match status" value="1"/>
</dbReference>
<dbReference type="PANTHER" id="PTHR34273">
    <property type="entry name" value="METHYLTHIORIBOSE KINASE"/>
    <property type="match status" value="1"/>
</dbReference>
<dbReference type="PANTHER" id="PTHR34273:SF2">
    <property type="entry name" value="METHYLTHIORIBOSE KINASE"/>
    <property type="match status" value="1"/>
</dbReference>
<dbReference type="Pfam" id="PF01636">
    <property type="entry name" value="APH"/>
    <property type="match status" value="1"/>
</dbReference>
<dbReference type="PIRSF" id="PIRSF031134">
    <property type="entry name" value="MTRK"/>
    <property type="match status" value="1"/>
</dbReference>
<dbReference type="SUPFAM" id="SSF56112">
    <property type="entry name" value="Protein kinase-like (PK-like)"/>
    <property type="match status" value="1"/>
</dbReference>
<keyword id="KW-0028">Amino-acid biosynthesis</keyword>
<keyword id="KW-0067">ATP-binding</keyword>
<keyword id="KW-0418">Kinase</keyword>
<keyword id="KW-0486">Methionine biosynthesis</keyword>
<keyword id="KW-0547">Nucleotide-binding</keyword>
<keyword id="KW-0808">Transferase</keyword>
<comment type="function">
    <text evidence="1">Catalyzes the phosphorylation of methylthioribose into methylthioribose-1-phosphate.</text>
</comment>
<comment type="catalytic activity">
    <reaction evidence="1">
        <text>5-(methylsulfanyl)-D-ribose + ATP = 5-(methylsulfanyl)-alpha-D-ribose 1-phosphate + ADP + H(+)</text>
        <dbReference type="Rhea" id="RHEA:22312"/>
        <dbReference type="ChEBI" id="CHEBI:15378"/>
        <dbReference type="ChEBI" id="CHEBI:30616"/>
        <dbReference type="ChEBI" id="CHEBI:58533"/>
        <dbReference type="ChEBI" id="CHEBI:78440"/>
        <dbReference type="ChEBI" id="CHEBI:456216"/>
        <dbReference type="EC" id="2.7.1.100"/>
    </reaction>
</comment>
<comment type="pathway">
    <text evidence="1">Amino-acid biosynthesis; L-methionine biosynthesis via salvage pathway; S-methyl-5-thio-alpha-D-ribose 1-phosphate from S-methyl-5'-thioadenosine (hydrolase route): step 2/2.</text>
</comment>
<comment type="subunit">
    <text evidence="1">Homodimer.</text>
</comment>
<comment type="similarity">
    <text evidence="1">Belongs to the methylthioribose kinase family.</text>
</comment>
<organism>
    <name type="scientific">Klebsiella pneumoniae subsp. pneumoniae (strain ATCC 700721 / MGH 78578)</name>
    <dbReference type="NCBI Taxonomy" id="272620"/>
    <lineage>
        <taxon>Bacteria</taxon>
        <taxon>Pseudomonadati</taxon>
        <taxon>Pseudomonadota</taxon>
        <taxon>Gammaproteobacteria</taxon>
        <taxon>Enterobacterales</taxon>
        <taxon>Enterobacteriaceae</taxon>
        <taxon>Klebsiella/Raoultella group</taxon>
        <taxon>Klebsiella</taxon>
        <taxon>Klebsiella pneumoniae complex</taxon>
    </lineage>
</organism>
<feature type="chain" id="PRO_0000357347" description="Methylthioribose kinase">
    <location>
        <begin position="1"/>
        <end position="399"/>
    </location>
</feature>
<feature type="binding site" evidence="1">
    <location>
        <position position="40"/>
    </location>
    <ligand>
        <name>ATP</name>
        <dbReference type="ChEBI" id="CHEBI:30616"/>
    </ligand>
</feature>
<feature type="binding site" evidence="1">
    <location>
        <position position="57"/>
    </location>
    <ligand>
        <name>ATP</name>
        <dbReference type="ChEBI" id="CHEBI:30616"/>
    </ligand>
</feature>
<feature type="binding site" evidence="1">
    <location>
        <begin position="111"/>
        <end position="113"/>
    </location>
    <ligand>
        <name>ATP</name>
        <dbReference type="ChEBI" id="CHEBI:30616"/>
    </ligand>
</feature>
<feature type="binding site" evidence="1">
    <location>
        <position position="229"/>
    </location>
    <ligand>
        <name>substrate</name>
    </ligand>
</feature>
<feature type="binding site" evidence="1">
    <location>
        <begin position="246"/>
        <end position="248"/>
    </location>
    <ligand>
        <name>ATP</name>
        <dbReference type="ChEBI" id="CHEBI:30616"/>
    </ligand>
</feature>
<feature type="binding site" evidence="1">
    <location>
        <position position="344"/>
    </location>
    <ligand>
        <name>substrate</name>
    </ligand>
</feature>
<protein>
    <recommendedName>
        <fullName evidence="1">Methylthioribose kinase</fullName>
        <shortName evidence="1">MTR kinase</shortName>
        <ecNumber evidence="1">2.7.1.100</ecNumber>
    </recommendedName>
</protein>